<reference key="1">
    <citation type="submission" date="2007-02" db="EMBL/GenBank/DDBJ databases">
        <title>Complete sequence of Pyrobaculum calidifontis JCM 11548.</title>
        <authorList>
            <consortium name="US DOE Joint Genome Institute"/>
            <person name="Copeland A."/>
            <person name="Lucas S."/>
            <person name="Lapidus A."/>
            <person name="Barry K."/>
            <person name="Glavina del Rio T."/>
            <person name="Dalin E."/>
            <person name="Tice H."/>
            <person name="Pitluck S."/>
            <person name="Chain P."/>
            <person name="Malfatti S."/>
            <person name="Shin M."/>
            <person name="Vergez L."/>
            <person name="Schmutz J."/>
            <person name="Larimer F."/>
            <person name="Land M."/>
            <person name="Hauser L."/>
            <person name="Kyrpides N."/>
            <person name="Mikhailova N."/>
            <person name="Cozen A.E."/>
            <person name="Fitz-Gibbon S.T."/>
            <person name="House C.H."/>
            <person name="Saltikov C."/>
            <person name="Lowe T.M."/>
            <person name="Richardson P."/>
        </authorList>
    </citation>
    <scope>NUCLEOTIDE SEQUENCE [LARGE SCALE GENOMIC DNA]</scope>
    <source>
        <strain>DSM 21063 / JCM 11548 / VA1</strain>
    </source>
</reference>
<dbReference type="EC" id="6.1.1.15" evidence="1"/>
<dbReference type="EMBL" id="CP000561">
    <property type="protein sequence ID" value="ABO08517.1"/>
    <property type="molecule type" value="Genomic_DNA"/>
</dbReference>
<dbReference type="RefSeq" id="WP_011849775.1">
    <property type="nucleotide sequence ID" value="NC_009073.1"/>
</dbReference>
<dbReference type="SMR" id="A3MV50"/>
<dbReference type="STRING" id="410359.Pcal_1092"/>
<dbReference type="GeneID" id="4910063"/>
<dbReference type="KEGG" id="pcl:Pcal_1092"/>
<dbReference type="eggNOG" id="arCOG00402">
    <property type="taxonomic scope" value="Archaea"/>
</dbReference>
<dbReference type="HOGENOM" id="CLU_001882_4_2_2"/>
<dbReference type="OrthoDB" id="7375at2157"/>
<dbReference type="Proteomes" id="UP000001431">
    <property type="component" value="Chromosome"/>
</dbReference>
<dbReference type="GO" id="GO:0017101">
    <property type="term" value="C:aminoacyl-tRNA synthetase multienzyme complex"/>
    <property type="evidence" value="ECO:0007669"/>
    <property type="project" value="TreeGrafter"/>
</dbReference>
<dbReference type="GO" id="GO:0005737">
    <property type="term" value="C:cytoplasm"/>
    <property type="evidence" value="ECO:0007669"/>
    <property type="project" value="UniProtKB-SubCell"/>
</dbReference>
<dbReference type="GO" id="GO:0005524">
    <property type="term" value="F:ATP binding"/>
    <property type="evidence" value="ECO:0007669"/>
    <property type="project" value="UniProtKB-UniRule"/>
</dbReference>
<dbReference type="GO" id="GO:0004827">
    <property type="term" value="F:proline-tRNA ligase activity"/>
    <property type="evidence" value="ECO:0007669"/>
    <property type="project" value="UniProtKB-UniRule"/>
</dbReference>
<dbReference type="GO" id="GO:0006433">
    <property type="term" value="P:prolyl-tRNA aminoacylation"/>
    <property type="evidence" value="ECO:0007669"/>
    <property type="project" value="UniProtKB-UniRule"/>
</dbReference>
<dbReference type="CDD" id="cd00862">
    <property type="entry name" value="ProRS_anticodon_zinc"/>
    <property type="match status" value="1"/>
</dbReference>
<dbReference type="FunFam" id="3.40.50.800:FF:000005">
    <property type="entry name" value="bifunctional glutamate/proline--tRNA ligase"/>
    <property type="match status" value="1"/>
</dbReference>
<dbReference type="FunFam" id="3.30.930.10:FF:000037">
    <property type="entry name" value="Proline--tRNA ligase"/>
    <property type="match status" value="1"/>
</dbReference>
<dbReference type="Gene3D" id="3.40.50.800">
    <property type="entry name" value="Anticodon-binding domain"/>
    <property type="match status" value="1"/>
</dbReference>
<dbReference type="Gene3D" id="3.30.930.10">
    <property type="entry name" value="Bira Bifunctional Protein, Domain 2"/>
    <property type="match status" value="1"/>
</dbReference>
<dbReference type="Gene3D" id="3.30.110.30">
    <property type="entry name" value="C-terminal domain of ProRS"/>
    <property type="match status" value="1"/>
</dbReference>
<dbReference type="HAMAP" id="MF_01571">
    <property type="entry name" value="Pro_tRNA_synth_type3"/>
    <property type="match status" value="1"/>
</dbReference>
<dbReference type="InterPro" id="IPR002314">
    <property type="entry name" value="aa-tRNA-synt_IIb"/>
</dbReference>
<dbReference type="InterPro" id="IPR006195">
    <property type="entry name" value="aa-tRNA-synth_II"/>
</dbReference>
<dbReference type="InterPro" id="IPR045864">
    <property type="entry name" value="aa-tRNA-synth_II/BPL/LPL"/>
</dbReference>
<dbReference type="InterPro" id="IPR004154">
    <property type="entry name" value="Anticodon-bd"/>
</dbReference>
<dbReference type="InterPro" id="IPR036621">
    <property type="entry name" value="Anticodon-bd_dom_sf"/>
</dbReference>
<dbReference type="InterPro" id="IPR002316">
    <property type="entry name" value="Pro-tRNA-ligase_IIa"/>
</dbReference>
<dbReference type="InterPro" id="IPR004499">
    <property type="entry name" value="Pro-tRNA-ligase_IIa_arc-type"/>
</dbReference>
<dbReference type="InterPro" id="IPR016061">
    <property type="entry name" value="Pro-tRNA_ligase_II_C"/>
</dbReference>
<dbReference type="InterPro" id="IPR017449">
    <property type="entry name" value="Pro-tRNA_synth_II"/>
</dbReference>
<dbReference type="NCBIfam" id="TIGR00408">
    <property type="entry name" value="proS_fam_I"/>
    <property type="match status" value="1"/>
</dbReference>
<dbReference type="PANTHER" id="PTHR43382:SF2">
    <property type="entry name" value="BIFUNCTIONAL GLUTAMATE_PROLINE--TRNA LIGASE"/>
    <property type="match status" value="1"/>
</dbReference>
<dbReference type="PANTHER" id="PTHR43382">
    <property type="entry name" value="PROLYL-TRNA SYNTHETASE"/>
    <property type="match status" value="1"/>
</dbReference>
<dbReference type="Pfam" id="PF03129">
    <property type="entry name" value="HGTP_anticodon"/>
    <property type="match status" value="1"/>
</dbReference>
<dbReference type="Pfam" id="PF09180">
    <property type="entry name" value="ProRS-C_1"/>
    <property type="match status" value="1"/>
</dbReference>
<dbReference type="Pfam" id="PF00587">
    <property type="entry name" value="tRNA-synt_2b"/>
    <property type="match status" value="1"/>
</dbReference>
<dbReference type="PRINTS" id="PR01046">
    <property type="entry name" value="TRNASYNTHPRO"/>
</dbReference>
<dbReference type="SMART" id="SM00946">
    <property type="entry name" value="ProRS-C_1"/>
    <property type="match status" value="1"/>
</dbReference>
<dbReference type="SUPFAM" id="SSF64586">
    <property type="entry name" value="C-terminal domain of ProRS"/>
    <property type="match status" value="1"/>
</dbReference>
<dbReference type="SUPFAM" id="SSF52954">
    <property type="entry name" value="Class II aaRS ABD-related"/>
    <property type="match status" value="1"/>
</dbReference>
<dbReference type="SUPFAM" id="SSF55681">
    <property type="entry name" value="Class II aaRS and biotin synthetases"/>
    <property type="match status" value="1"/>
</dbReference>
<dbReference type="PROSITE" id="PS50862">
    <property type="entry name" value="AA_TRNA_LIGASE_II"/>
    <property type="match status" value="1"/>
</dbReference>
<keyword id="KW-0030">Aminoacyl-tRNA synthetase</keyword>
<keyword id="KW-0067">ATP-binding</keyword>
<keyword id="KW-0963">Cytoplasm</keyword>
<keyword id="KW-0436">Ligase</keyword>
<keyword id="KW-0547">Nucleotide-binding</keyword>
<keyword id="KW-0648">Protein biosynthesis</keyword>
<name>SYP_PYRCJ</name>
<accession>A3MV50</accession>
<feature type="chain" id="PRO_1000069195" description="Proline--tRNA ligase">
    <location>
        <begin position="1"/>
        <end position="487"/>
    </location>
</feature>
<comment type="function">
    <text evidence="1">Catalyzes the attachment of proline to tRNA(Pro) in a two-step reaction: proline is first activated by ATP to form Pro-AMP and then transferred to the acceptor end of tRNA(Pro).</text>
</comment>
<comment type="catalytic activity">
    <reaction evidence="1">
        <text>tRNA(Pro) + L-proline + ATP = L-prolyl-tRNA(Pro) + AMP + diphosphate</text>
        <dbReference type="Rhea" id="RHEA:14305"/>
        <dbReference type="Rhea" id="RHEA-COMP:9700"/>
        <dbReference type="Rhea" id="RHEA-COMP:9702"/>
        <dbReference type="ChEBI" id="CHEBI:30616"/>
        <dbReference type="ChEBI" id="CHEBI:33019"/>
        <dbReference type="ChEBI" id="CHEBI:60039"/>
        <dbReference type="ChEBI" id="CHEBI:78442"/>
        <dbReference type="ChEBI" id="CHEBI:78532"/>
        <dbReference type="ChEBI" id="CHEBI:456215"/>
        <dbReference type="EC" id="6.1.1.15"/>
    </reaction>
</comment>
<comment type="subunit">
    <text evidence="1">Homodimer.</text>
</comment>
<comment type="subcellular location">
    <subcellularLocation>
        <location evidence="1">Cytoplasm</location>
    </subcellularLocation>
</comment>
<comment type="domain">
    <text evidence="1">Consists of three domains: the N-terminal catalytic domain, the anticodon-binding domain and the C-terminal extension.</text>
</comment>
<comment type="similarity">
    <text evidence="1">Belongs to the class-II aminoacyl-tRNA synthetase family. ProS type 3 subfamily.</text>
</comment>
<gene>
    <name evidence="1" type="primary">proS</name>
    <name type="ordered locus">Pcal_1092</name>
</gene>
<sequence>MRLVREARPHGREKLRSNLMEWFHWLLREAEIYDVRYPVKGAYVWRPYGMKIRRNVEALIRRLHDETGHEEVLFPVFIPYEFFGKESEHIRGFEKEVFWVSKGGEGGERLVLRPTSETAIMPMVKLWVQDYKDLPLRLYQIVSVFRAETKMTHPMIRLREISMFKEAHTVHVDREDAERQVREAVEIYKRIFDEMCLAYMINRRPDWDKFAGAVYTIAFDTVLPDGRALQIGTVHYLGTKFTEVFEVTYLAPDGSRRLAHTTSYGISERSIAAMLITHGDDAGTVIPPKLAPIQVVVVPIFYGEEEKGVVMPAAEQAAKALREAGFRVHVDGRDDKTPGWKFYYWELRGVPLRVEVGKRDVEGRQVVVARRDTLAKYAVAVDELVDAVKALLSEVEANLRRRAVEELRGRIVRVETVEAARAAIREGKVVELPWSGDNDCGLKLQELVGADALGVPMDSEASVGGFDLRDPACGKRAEVWLRLAERY</sequence>
<organism>
    <name type="scientific">Pyrobaculum calidifontis (strain DSM 21063 / JCM 11548 / VA1)</name>
    <dbReference type="NCBI Taxonomy" id="410359"/>
    <lineage>
        <taxon>Archaea</taxon>
        <taxon>Thermoproteota</taxon>
        <taxon>Thermoprotei</taxon>
        <taxon>Thermoproteales</taxon>
        <taxon>Thermoproteaceae</taxon>
        <taxon>Pyrobaculum</taxon>
    </lineage>
</organism>
<protein>
    <recommendedName>
        <fullName evidence="1">Proline--tRNA ligase</fullName>
        <ecNumber evidence="1">6.1.1.15</ecNumber>
    </recommendedName>
    <alternativeName>
        <fullName evidence="1">Prolyl-tRNA synthetase</fullName>
        <shortName evidence="1">ProRS</shortName>
    </alternativeName>
</protein>
<evidence type="ECO:0000255" key="1">
    <source>
        <dbReference type="HAMAP-Rule" id="MF_01571"/>
    </source>
</evidence>
<proteinExistence type="inferred from homology"/>